<evidence type="ECO:0000255" key="1"/>
<evidence type="ECO:0000305" key="2"/>
<sequence length="220" mass="23042">MSNANFSILVDFAAGGLVLASVLIVWRRDLRAIVRLLAWQGAALAAIPLLRGIRDNDRALIAVGIAVLALRALVLPWLLARAVGAEAAAQREATPLVNTASSLLITAGLTLTAFAITQPVVNLEPGVTINAVPAAFAVVLIALFVMTTRLHAVSQAAGFLMLDNGIAATAFLLTAGVPLIVELGASLDVLFAVIVIGVLTGRLRRIFGDADLDKLRELRD</sequence>
<gene>
    <name type="ordered locus">Rv0085</name>
    <name type="ORF">MTCY251.03</name>
</gene>
<reference key="1">
    <citation type="journal article" date="1998" name="Nature">
        <title>Deciphering the biology of Mycobacterium tuberculosis from the complete genome sequence.</title>
        <authorList>
            <person name="Cole S.T."/>
            <person name="Brosch R."/>
            <person name="Parkhill J."/>
            <person name="Garnier T."/>
            <person name="Churcher C.M."/>
            <person name="Harris D.E."/>
            <person name="Gordon S.V."/>
            <person name="Eiglmeier K."/>
            <person name="Gas S."/>
            <person name="Barry C.E. III"/>
            <person name="Tekaia F."/>
            <person name="Badcock K."/>
            <person name="Basham D."/>
            <person name="Brown D."/>
            <person name="Chillingworth T."/>
            <person name="Connor R."/>
            <person name="Davies R.M."/>
            <person name="Devlin K."/>
            <person name="Feltwell T."/>
            <person name="Gentles S."/>
            <person name="Hamlin N."/>
            <person name="Holroyd S."/>
            <person name="Hornsby T."/>
            <person name="Jagels K."/>
            <person name="Krogh A."/>
            <person name="McLean J."/>
            <person name="Moule S."/>
            <person name="Murphy L.D."/>
            <person name="Oliver S."/>
            <person name="Osborne J."/>
            <person name="Quail M.A."/>
            <person name="Rajandream M.A."/>
            <person name="Rogers J."/>
            <person name="Rutter S."/>
            <person name="Seeger K."/>
            <person name="Skelton S."/>
            <person name="Squares S."/>
            <person name="Squares R."/>
            <person name="Sulston J.E."/>
            <person name="Taylor K."/>
            <person name="Whitehead S."/>
            <person name="Barrell B.G."/>
        </authorList>
    </citation>
    <scope>NUCLEOTIDE SEQUENCE [LARGE SCALE GENOMIC DNA]</scope>
    <source>
        <strain>ATCC 25618 / H37Rv</strain>
    </source>
</reference>
<reference key="2">
    <citation type="journal article" date="2008" name="BMC Syst. Biol.">
        <title>targetTB: a target identification pipeline for Mycobacterium tuberculosis through an interactome, reactome and genome-scale structural analysis.</title>
        <authorList>
            <person name="Raman K."/>
            <person name="Yeturu K."/>
            <person name="Chandra N."/>
        </authorList>
    </citation>
    <scope>IDENTIFICATION AS A DRUG TARGET [LARGE SCALE ANALYSIS]</scope>
</reference>
<comment type="subcellular location">
    <subcellularLocation>
        <location evidence="2">Cell membrane</location>
        <topology evidence="2">Multi-pass membrane protein</topology>
    </subcellularLocation>
</comment>
<comment type="miscellaneous">
    <text>Was identified as a high-confidence drug target.</text>
</comment>
<feature type="chain" id="PRO_0000103660" description="Uncharacterized protein Rv0085">
    <location>
        <begin position="1"/>
        <end position="220"/>
    </location>
</feature>
<feature type="transmembrane region" description="Helical" evidence="1">
    <location>
        <begin position="6"/>
        <end position="26"/>
    </location>
</feature>
<feature type="transmembrane region" description="Helical" evidence="1">
    <location>
        <begin position="33"/>
        <end position="53"/>
    </location>
</feature>
<feature type="transmembrane region" description="Helical" evidence="1">
    <location>
        <begin position="59"/>
        <end position="79"/>
    </location>
</feature>
<feature type="transmembrane region" description="Helical" evidence="1">
    <location>
        <begin position="103"/>
        <end position="123"/>
    </location>
</feature>
<feature type="transmembrane region" description="Helical" evidence="1">
    <location>
        <begin position="126"/>
        <end position="146"/>
    </location>
</feature>
<feature type="transmembrane region" description="Helical" evidence="1">
    <location>
        <begin position="157"/>
        <end position="177"/>
    </location>
</feature>
<feature type="transmembrane region" description="Helical" evidence="1">
    <location>
        <begin position="179"/>
        <end position="199"/>
    </location>
</feature>
<keyword id="KW-1003">Cell membrane</keyword>
<keyword id="KW-0472">Membrane</keyword>
<keyword id="KW-1185">Reference proteome</keyword>
<keyword id="KW-0812">Transmembrane</keyword>
<keyword id="KW-1133">Transmembrane helix</keyword>
<accession>P9WM75</accession>
<accession>L0T2J6</accession>
<accession>P64681</accession>
<accession>Q10882</accession>
<protein>
    <recommendedName>
        <fullName>Uncharacterized protein Rv0085</fullName>
    </recommendedName>
</protein>
<dbReference type="EMBL" id="AL123456">
    <property type="protein sequence ID" value="CCP42810.1"/>
    <property type="molecule type" value="Genomic_DNA"/>
</dbReference>
<dbReference type="PIR" id="E70749">
    <property type="entry name" value="E70749"/>
</dbReference>
<dbReference type="RefSeq" id="WP_003400661.1">
    <property type="nucleotide sequence ID" value="NZ_NVQJ01000005.1"/>
</dbReference>
<dbReference type="FunCoup" id="P9WM75">
    <property type="interactions" value="4"/>
</dbReference>
<dbReference type="STRING" id="83332.Rv0085"/>
<dbReference type="PaxDb" id="83332-Rv0085"/>
<dbReference type="DNASU" id="886973"/>
<dbReference type="KEGG" id="mtu:Rv0085"/>
<dbReference type="KEGG" id="mtv:RVBD_0085"/>
<dbReference type="TubercuList" id="Rv0085"/>
<dbReference type="eggNOG" id="COG4237">
    <property type="taxonomic scope" value="Bacteria"/>
</dbReference>
<dbReference type="InParanoid" id="P9WM75"/>
<dbReference type="OrthoDB" id="4833173at2"/>
<dbReference type="Proteomes" id="UP000001584">
    <property type="component" value="Chromosome"/>
</dbReference>
<dbReference type="GO" id="GO:0005886">
    <property type="term" value="C:plasma membrane"/>
    <property type="evidence" value="ECO:0007669"/>
    <property type="project" value="UniProtKB-SubCell"/>
</dbReference>
<dbReference type="InterPro" id="IPR038730">
    <property type="entry name" value="HyfE-like"/>
</dbReference>
<dbReference type="PANTHER" id="PTHR38601">
    <property type="entry name" value="HYDROGENASE-4 COMPONENT E"/>
    <property type="match status" value="1"/>
</dbReference>
<dbReference type="PANTHER" id="PTHR38601:SF1">
    <property type="entry name" value="HYDROGENASE-4 COMPONENT E"/>
    <property type="match status" value="1"/>
</dbReference>
<name>Y085_MYCTU</name>
<organism>
    <name type="scientific">Mycobacterium tuberculosis (strain ATCC 25618 / H37Rv)</name>
    <dbReference type="NCBI Taxonomy" id="83332"/>
    <lineage>
        <taxon>Bacteria</taxon>
        <taxon>Bacillati</taxon>
        <taxon>Actinomycetota</taxon>
        <taxon>Actinomycetes</taxon>
        <taxon>Mycobacteriales</taxon>
        <taxon>Mycobacteriaceae</taxon>
        <taxon>Mycobacterium</taxon>
        <taxon>Mycobacterium tuberculosis complex</taxon>
    </lineage>
</organism>
<proteinExistence type="predicted"/>